<proteinExistence type="evidence at transcript level"/>
<name>VIRF_YEREN</name>
<gene>
    <name type="primary">virF</name>
</gene>
<dbReference type="EMBL" id="AF102990">
    <property type="protein sequence ID" value="AAD16833.1"/>
    <property type="molecule type" value="Genomic_DNA"/>
</dbReference>
<dbReference type="EMBL" id="AY150843">
    <property type="protein sequence ID" value="AAN37560.1"/>
    <property type="molecule type" value="Genomic_DNA"/>
</dbReference>
<dbReference type="PIR" id="B32242">
    <property type="entry name" value="B32242"/>
</dbReference>
<dbReference type="RefSeq" id="NP_052410.1">
    <property type="nucleotide sequence ID" value="NC_002120.1"/>
</dbReference>
<dbReference type="RefSeq" id="NP_783684.1">
    <property type="nucleotide sequence ID" value="NC_004564.1"/>
</dbReference>
<dbReference type="RefSeq" id="NP_863532.1">
    <property type="nucleotide sequence ID" value="NC_005017.1"/>
</dbReference>
<dbReference type="RefSeq" id="WP_005176447.1">
    <property type="nucleotide sequence ID" value="NZ_NWMR01000033.1"/>
</dbReference>
<dbReference type="RefSeq" id="WP_010891222.1">
    <property type="nucleotide sequence ID" value="NZ_KN150737.1"/>
</dbReference>
<dbReference type="SMR" id="P0C2V5"/>
<dbReference type="KEGG" id="yet:CH48_4202"/>
<dbReference type="PATRIC" id="fig|630.129.peg.4371"/>
<dbReference type="GO" id="GO:0003700">
    <property type="term" value="F:DNA-binding transcription factor activity"/>
    <property type="evidence" value="ECO:0007669"/>
    <property type="project" value="InterPro"/>
</dbReference>
<dbReference type="GO" id="GO:0043565">
    <property type="term" value="F:sequence-specific DNA binding"/>
    <property type="evidence" value="ECO:0007669"/>
    <property type="project" value="InterPro"/>
</dbReference>
<dbReference type="Gene3D" id="1.10.10.60">
    <property type="entry name" value="Homeodomain-like"/>
    <property type="match status" value="1"/>
</dbReference>
<dbReference type="InterPro" id="IPR050204">
    <property type="entry name" value="AraC_XylS_family_regulators"/>
</dbReference>
<dbReference type="InterPro" id="IPR054015">
    <property type="entry name" value="ExsA-like_N"/>
</dbReference>
<dbReference type="InterPro" id="IPR009057">
    <property type="entry name" value="Homeodomain-like_sf"/>
</dbReference>
<dbReference type="InterPro" id="IPR037923">
    <property type="entry name" value="HTH-like"/>
</dbReference>
<dbReference type="InterPro" id="IPR018060">
    <property type="entry name" value="HTH_AraC"/>
</dbReference>
<dbReference type="InterPro" id="IPR018062">
    <property type="entry name" value="HTH_AraC-typ_CS"/>
</dbReference>
<dbReference type="InterPro" id="IPR020449">
    <property type="entry name" value="Tscrpt_reg_AraC-type_HTH"/>
</dbReference>
<dbReference type="PANTHER" id="PTHR46796:SF6">
    <property type="entry name" value="ARAC SUBFAMILY"/>
    <property type="match status" value="1"/>
</dbReference>
<dbReference type="PANTHER" id="PTHR46796">
    <property type="entry name" value="HTH-TYPE TRANSCRIPTIONAL ACTIVATOR RHAS-RELATED"/>
    <property type="match status" value="1"/>
</dbReference>
<dbReference type="Pfam" id="PF22200">
    <property type="entry name" value="ExsA_N"/>
    <property type="match status" value="1"/>
</dbReference>
<dbReference type="Pfam" id="PF12833">
    <property type="entry name" value="HTH_18"/>
    <property type="match status" value="1"/>
</dbReference>
<dbReference type="PRINTS" id="PR00032">
    <property type="entry name" value="HTHARAC"/>
</dbReference>
<dbReference type="SMART" id="SM00342">
    <property type="entry name" value="HTH_ARAC"/>
    <property type="match status" value="1"/>
</dbReference>
<dbReference type="SUPFAM" id="SSF46689">
    <property type="entry name" value="Homeodomain-like"/>
    <property type="match status" value="1"/>
</dbReference>
<dbReference type="SUPFAM" id="SSF51215">
    <property type="entry name" value="Regulatory protein AraC"/>
    <property type="match status" value="1"/>
</dbReference>
<dbReference type="PROSITE" id="PS00041">
    <property type="entry name" value="HTH_ARAC_FAMILY_1"/>
    <property type="match status" value="1"/>
</dbReference>
<dbReference type="PROSITE" id="PS01124">
    <property type="entry name" value="HTH_ARAC_FAMILY_2"/>
    <property type="match status" value="1"/>
</dbReference>
<feature type="chain" id="PRO_0000194596" description="Virulence regulon transcriptional activator VirF">
    <location>
        <begin position="1"/>
        <end position="271"/>
    </location>
</feature>
<feature type="domain" description="HTH araC/xylS-type" evidence="1">
    <location>
        <begin position="167"/>
        <end position="265"/>
    </location>
</feature>
<feature type="DNA-binding region" description="H-T-H motif" evidence="1">
    <location>
        <begin position="184"/>
        <end position="205"/>
    </location>
</feature>
<feature type="DNA-binding region" description="H-T-H motif" evidence="1">
    <location>
        <begin position="232"/>
        <end position="255"/>
    </location>
</feature>
<feature type="sequence variant" description="In plasmid pYVa127/90.">
    <original>I</original>
    <variation>V</variation>
    <location>
        <position position="34"/>
    </location>
</feature>
<feature type="sequence variant" description="In plasmid pYVa127/90.">
    <original>A</original>
    <variation>S</variation>
    <location>
        <position position="99"/>
    </location>
</feature>
<feature type="sequence variant" description="In plasmid pYVa127/90.">
    <original>A</original>
    <variation>T</variation>
    <location>
        <position position="152"/>
    </location>
</feature>
<feature type="sequence variant" description="In plasmid pYVa127/90.">
    <original>G</original>
    <variation>C</variation>
    <location>
        <position position="228"/>
    </location>
</feature>
<sequence>MASLEIIKLEWATPIFKVVEHSQDGLYILLQGQISWQNSSQTYDLDEGNMLFLRRGSYAVRCGTKEPCQLLWIPLPGSFLSTFLHRFGSLLSEIRRDNATPKPLLIFNISPILSQSIQNLCAILERSDFPSVLTQLRIEELLLLLAFSSQGALFLSALRHLGNRPEERLQKFMEENYLQGWKLSKFAREFGMGLTTFKELFGTVYGISPRAWISERRILYAHQLLLNGKMSIVDIAMEAGFSSQSYFTQSYRRRFGCTPSQARLTKIATTG</sequence>
<comment type="function">
    <text>Transcriptional activator of the Yersinia virulence regulon.</text>
</comment>
<comment type="induction">
    <text>By increase in temperature.</text>
</comment>
<organism>
    <name type="scientific">Yersinia enterocolitica</name>
    <dbReference type="NCBI Taxonomy" id="630"/>
    <lineage>
        <taxon>Bacteria</taxon>
        <taxon>Pseudomonadati</taxon>
        <taxon>Pseudomonadota</taxon>
        <taxon>Gammaproteobacteria</taxon>
        <taxon>Enterobacterales</taxon>
        <taxon>Yersiniaceae</taxon>
        <taxon>Yersinia</taxon>
    </lineage>
</organism>
<accession>P0C2V5</accession>
<accession>P13225</accession>
<accession>Q93KT3</accession>
<reference key="1">
    <citation type="journal article" date="1989" name="J. Bacteriol.">
        <title>Homology between virF, the transcriptional activator of the Yersinia virulence regulon, and AraC, the Escherichia coli arabinose operon regulator.</title>
        <authorList>
            <person name="Cornelis G."/>
            <person name="Sluiters C."/>
            <person name="de Rouvroit C.L."/>
            <person name="Michiels T."/>
        </authorList>
    </citation>
    <scope>NUCLEOTIDE SEQUENCE [GENOMIC DNA]</scope>
    <source>
        <strain>W22703 / Serotype O:9 / Biotype 2</strain>
        <plasmid>pYVe227</plasmid>
    </source>
</reference>
<reference key="2">
    <citation type="submission" date="1998-10" db="EMBL/GenBank/DDBJ databases">
        <title>Detailed genetic map of the pYVe227 plasmid of Yersinia enterocolitica serotype O:9.</title>
        <authorList>
            <person name="Iriarte M."/>
            <person name="Lambermont I."/>
            <person name="Kerbourch C."/>
            <person name="Cornelis G.R."/>
        </authorList>
    </citation>
    <scope>NUCLEOTIDE SEQUENCE [GENOMIC DNA]</scope>
    <source>
        <strain>W22703 / Serotype O:9 / Biotype 2</strain>
        <plasmid>pYVe227</plasmid>
    </source>
</reference>
<reference key="3">
    <citation type="journal article" date="2003" name="Res. Microbiol.">
        <title>DNA sequence and analysis of the pYVa127/90 virulence plasmid of Yersinia enterocolitica strain A127/90.</title>
        <authorList>
            <person name="Foultier B."/>
            <person name="Cornelis G.R."/>
        </authorList>
    </citation>
    <scope>NUCLEOTIDE SEQUENCE [GENOMIC DNA]</scope>
    <source>
        <strain>A127/90 / Serotype O:8 / Biotype 1B</strain>
        <plasmid>pYVa127/90</plasmid>
    </source>
</reference>
<geneLocation type="plasmid">
    <name>pYVe227</name>
</geneLocation>
<geneLocation type="plasmid">
    <name>pYVa127/90</name>
</geneLocation>
<evidence type="ECO:0000255" key="1">
    <source>
        <dbReference type="PROSITE-ProRule" id="PRU00593"/>
    </source>
</evidence>
<keyword id="KW-0010">Activator</keyword>
<keyword id="KW-0238">DNA-binding</keyword>
<keyword id="KW-0614">Plasmid</keyword>
<keyword id="KW-0804">Transcription</keyword>
<keyword id="KW-0805">Transcription regulation</keyword>
<keyword id="KW-0843">Virulence</keyword>
<protein>
    <recommendedName>
        <fullName>Virulence regulon transcriptional activator VirF</fullName>
    </recommendedName>
</protein>